<dbReference type="EMBL" id="CP000949">
    <property type="protein sequence ID" value="ACA75148.1"/>
    <property type="molecule type" value="Genomic_DNA"/>
</dbReference>
<dbReference type="SMR" id="B1JAH1"/>
<dbReference type="STRING" id="390235.PputW619_4668"/>
<dbReference type="KEGG" id="ppw:PputW619_4668"/>
<dbReference type="eggNOG" id="COG0360">
    <property type="taxonomic scope" value="Bacteria"/>
</dbReference>
<dbReference type="HOGENOM" id="CLU_113441_6_1_6"/>
<dbReference type="OrthoDB" id="9812702at2"/>
<dbReference type="GO" id="GO:0022627">
    <property type="term" value="C:cytosolic small ribosomal subunit"/>
    <property type="evidence" value="ECO:0007669"/>
    <property type="project" value="TreeGrafter"/>
</dbReference>
<dbReference type="GO" id="GO:0070181">
    <property type="term" value="F:small ribosomal subunit rRNA binding"/>
    <property type="evidence" value="ECO:0007669"/>
    <property type="project" value="TreeGrafter"/>
</dbReference>
<dbReference type="GO" id="GO:0003735">
    <property type="term" value="F:structural constituent of ribosome"/>
    <property type="evidence" value="ECO:0007669"/>
    <property type="project" value="InterPro"/>
</dbReference>
<dbReference type="GO" id="GO:0006412">
    <property type="term" value="P:translation"/>
    <property type="evidence" value="ECO:0007669"/>
    <property type="project" value="UniProtKB-UniRule"/>
</dbReference>
<dbReference type="CDD" id="cd00473">
    <property type="entry name" value="bS6"/>
    <property type="match status" value="1"/>
</dbReference>
<dbReference type="FunFam" id="3.30.70.60:FF:000003">
    <property type="entry name" value="30S ribosomal protein S6"/>
    <property type="match status" value="1"/>
</dbReference>
<dbReference type="Gene3D" id="3.30.70.60">
    <property type="match status" value="1"/>
</dbReference>
<dbReference type="HAMAP" id="MF_00360">
    <property type="entry name" value="Ribosomal_bS6"/>
    <property type="match status" value="1"/>
</dbReference>
<dbReference type="InterPro" id="IPR000529">
    <property type="entry name" value="Ribosomal_bS6"/>
</dbReference>
<dbReference type="InterPro" id="IPR020815">
    <property type="entry name" value="Ribosomal_bS6_CS"/>
</dbReference>
<dbReference type="InterPro" id="IPR035980">
    <property type="entry name" value="Ribosomal_bS6_sf"/>
</dbReference>
<dbReference type="InterPro" id="IPR020814">
    <property type="entry name" value="Ribosomal_S6_plastid/chlpt"/>
</dbReference>
<dbReference type="InterPro" id="IPR014717">
    <property type="entry name" value="Transl_elong_EF1B/ribsomal_bS6"/>
</dbReference>
<dbReference type="NCBIfam" id="TIGR00166">
    <property type="entry name" value="S6"/>
    <property type="match status" value="1"/>
</dbReference>
<dbReference type="PANTHER" id="PTHR21011">
    <property type="entry name" value="MITOCHONDRIAL 28S RIBOSOMAL PROTEIN S6"/>
    <property type="match status" value="1"/>
</dbReference>
<dbReference type="PANTHER" id="PTHR21011:SF1">
    <property type="entry name" value="SMALL RIBOSOMAL SUBUNIT PROTEIN BS6M"/>
    <property type="match status" value="1"/>
</dbReference>
<dbReference type="Pfam" id="PF01250">
    <property type="entry name" value="Ribosomal_S6"/>
    <property type="match status" value="1"/>
</dbReference>
<dbReference type="SUPFAM" id="SSF54995">
    <property type="entry name" value="Ribosomal protein S6"/>
    <property type="match status" value="1"/>
</dbReference>
<dbReference type="PROSITE" id="PS01048">
    <property type="entry name" value="RIBOSOMAL_S6"/>
    <property type="match status" value="1"/>
</dbReference>
<protein>
    <recommendedName>
        <fullName evidence="1">Small ribosomal subunit protein bS6</fullName>
    </recommendedName>
    <alternativeName>
        <fullName evidence="3">30S ribosomal protein S6</fullName>
    </alternativeName>
</protein>
<name>RS6_PSEPW</name>
<gene>
    <name evidence="1" type="primary">rpsF</name>
    <name type="ordered locus">PputW619_4668</name>
</gene>
<keyword id="KW-0687">Ribonucleoprotein</keyword>
<keyword id="KW-0689">Ribosomal protein</keyword>
<keyword id="KW-0694">RNA-binding</keyword>
<keyword id="KW-0699">rRNA-binding</keyword>
<accession>B1JAH1</accession>
<sequence length="141" mass="16373">MRHYEIIFLVHPDQSEQVGGMVERYTKLIEEDGGKIHRLEDWGRRQLAYAINNVHKAHYVMLNVECTGKALAELEDNFRYNDAVIRNLVIRRDEAVTGQSEMLKAEENRSERRERRERPEHADSAEGDDSNDSDSSDNADE</sequence>
<feature type="chain" id="PRO_1000120790" description="Small ribosomal subunit protein bS6">
    <location>
        <begin position="1"/>
        <end position="141"/>
    </location>
</feature>
<feature type="region of interest" description="Disordered" evidence="2">
    <location>
        <begin position="96"/>
        <end position="141"/>
    </location>
</feature>
<feature type="compositionally biased region" description="Basic and acidic residues" evidence="2">
    <location>
        <begin position="103"/>
        <end position="124"/>
    </location>
</feature>
<feature type="compositionally biased region" description="Acidic residues" evidence="2">
    <location>
        <begin position="125"/>
        <end position="141"/>
    </location>
</feature>
<reference key="1">
    <citation type="submission" date="2008-02" db="EMBL/GenBank/DDBJ databases">
        <title>Complete sequence of Pseudomonas putida W619.</title>
        <authorList>
            <person name="Copeland A."/>
            <person name="Lucas S."/>
            <person name="Lapidus A."/>
            <person name="Barry K."/>
            <person name="Detter J.C."/>
            <person name="Glavina del Rio T."/>
            <person name="Dalin E."/>
            <person name="Tice H."/>
            <person name="Pitluck S."/>
            <person name="Chain P."/>
            <person name="Malfatti S."/>
            <person name="Shin M."/>
            <person name="Vergez L."/>
            <person name="Schmutz J."/>
            <person name="Larimer F."/>
            <person name="Land M."/>
            <person name="Hauser L."/>
            <person name="Kyrpides N."/>
            <person name="Kim E."/>
            <person name="Taghavi S."/>
            <person name="Vangronsveld D."/>
            <person name="van der Lelie D."/>
            <person name="Richardson P."/>
        </authorList>
    </citation>
    <scope>NUCLEOTIDE SEQUENCE [LARGE SCALE GENOMIC DNA]</scope>
    <source>
        <strain>W619</strain>
    </source>
</reference>
<organism>
    <name type="scientific">Pseudomonas putida (strain W619)</name>
    <dbReference type="NCBI Taxonomy" id="390235"/>
    <lineage>
        <taxon>Bacteria</taxon>
        <taxon>Pseudomonadati</taxon>
        <taxon>Pseudomonadota</taxon>
        <taxon>Gammaproteobacteria</taxon>
        <taxon>Pseudomonadales</taxon>
        <taxon>Pseudomonadaceae</taxon>
        <taxon>Pseudomonas</taxon>
    </lineage>
</organism>
<proteinExistence type="inferred from homology"/>
<evidence type="ECO:0000255" key="1">
    <source>
        <dbReference type="HAMAP-Rule" id="MF_00360"/>
    </source>
</evidence>
<evidence type="ECO:0000256" key="2">
    <source>
        <dbReference type="SAM" id="MobiDB-lite"/>
    </source>
</evidence>
<evidence type="ECO:0000305" key="3"/>
<comment type="function">
    <text evidence="1">Binds together with bS18 to 16S ribosomal RNA.</text>
</comment>
<comment type="similarity">
    <text evidence="1">Belongs to the bacterial ribosomal protein bS6 family.</text>
</comment>